<reference key="1">
    <citation type="journal article" date="2002" name="J. Bacteriol.">
        <title>Whole-genome comparison of Mycobacterium tuberculosis clinical and laboratory strains.</title>
        <authorList>
            <person name="Fleischmann R.D."/>
            <person name="Alland D."/>
            <person name="Eisen J.A."/>
            <person name="Carpenter L."/>
            <person name="White O."/>
            <person name="Peterson J.D."/>
            <person name="DeBoy R.T."/>
            <person name="Dodson R.J."/>
            <person name="Gwinn M.L."/>
            <person name="Haft D.H."/>
            <person name="Hickey E.K."/>
            <person name="Kolonay J.F."/>
            <person name="Nelson W.C."/>
            <person name="Umayam L.A."/>
            <person name="Ermolaeva M.D."/>
            <person name="Salzberg S.L."/>
            <person name="Delcher A."/>
            <person name="Utterback T.R."/>
            <person name="Weidman J.F."/>
            <person name="Khouri H.M."/>
            <person name="Gill J."/>
            <person name="Mikula A."/>
            <person name="Bishai W."/>
            <person name="Jacobs W.R. Jr."/>
            <person name="Venter J.C."/>
            <person name="Fraser C.M."/>
        </authorList>
    </citation>
    <scope>NUCLEOTIDE SEQUENCE [LARGE SCALE GENOMIC DNA]</scope>
    <source>
        <strain>CDC 1551 / Oshkosh</strain>
    </source>
</reference>
<feature type="chain" id="PRO_0000428224" description="Large ribosomal subunit protein bL32">
    <location>
        <begin position="1"/>
        <end position="57"/>
    </location>
</feature>
<feature type="region of interest" description="Disordered" evidence="1">
    <location>
        <begin position="1"/>
        <end position="22"/>
    </location>
</feature>
<feature type="compositionally biased region" description="Basic residues" evidence="1">
    <location>
        <begin position="1"/>
        <end position="19"/>
    </location>
</feature>
<keyword id="KW-1185">Reference proteome</keyword>
<keyword id="KW-0687">Ribonucleoprotein</keyword>
<keyword id="KW-0689">Ribosomal protein</keyword>
<dbReference type="EMBL" id="AE000516">
    <property type="protein sequence ID" value="AAK45255.1"/>
    <property type="status" value="ALT_INIT"/>
    <property type="molecule type" value="Genomic_DNA"/>
</dbReference>
<dbReference type="RefSeq" id="WP_003405053.1">
    <property type="nucleotide sequence ID" value="NZ_KK341227.1"/>
</dbReference>
<dbReference type="SMR" id="P9WH98"/>
<dbReference type="GeneID" id="45424948"/>
<dbReference type="KEGG" id="mtc:MT1007"/>
<dbReference type="PATRIC" id="fig|83331.31.peg.1081"/>
<dbReference type="HOGENOM" id="CLU_1538381_0_0_11"/>
<dbReference type="Proteomes" id="UP000001020">
    <property type="component" value="Chromosome"/>
</dbReference>
<dbReference type="GO" id="GO:0015934">
    <property type="term" value="C:large ribosomal subunit"/>
    <property type="evidence" value="ECO:0007669"/>
    <property type="project" value="InterPro"/>
</dbReference>
<dbReference type="GO" id="GO:0003735">
    <property type="term" value="F:structural constituent of ribosome"/>
    <property type="evidence" value="ECO:0007669"/>
    <property type="project" value="InterPro"/>
</dbReference>
<dbReference type="GO" id="GO:0006412">
    <property type="term" value="P:translation"/>
    <property type="evidence" value="ECO:0007669"/>
    <property type="project" value="UniProtKB-UniRule"/>
</dbReference>
<dbReference type="HAMAP" id="MF_00340">
    <property type="entry name" value="Ribosomal_bL32"/>
    <property type="match status" value="1"/>
</dbReference>
<dbReference type="InterPro" id="IPR002677">
    <property type="entry name" value="Ribosomal_bL32"/>
</dbReference>
<dbReference type="InterPro" id="IPR011332">
    <property type="entry name" value="Ribosomal_zn-bd"/>
</dbReference>
<dbReference type="NCBIfam" id="TIGR01031">
    <property type="entry name" value="rpmF_bact"/>
    <property type="match status" value="1"/>
</dbReference>
<dbReference type="Pfam" id="PF01783">
    <property type="entry name" value="Ribosomal_L32p"/>
    <property type="match status" value="1"/>
</dbReference>
<dbReference type="SUPFAM" id="SSF57829">
    <property type="entry name" value="Zn-binding ribosomal proteins"/>
    <property type="match status" value="1"/>
</dbReference>
<accession>P9WH98</accession>
<accession>L0T6Z3</accession>
<accession>P0A5V8</accession>
<accession>P58287</accession>
<evidence type="ECO:0000256" key="1">
    <source>
        <dbReference type="SAM" id="MobiDB-lite"/>
    </source>
</evidence>
<evidence type="ECO:0000305" key="2"/>
<sequence>MAVPKRRKSRSNTRSRRSQWKAAKTELVGVTVAGHAHKVPRRLLKAARLGLIDFDKR</sequence>
<organism>
    <name type="scientific">Mycobacterium tuberculosis (strain CDC 1551 / Oshkosh)</name>
    <dbReference type="NCBI Taxonomy" id="83331"/>
    <lineage>
        <taxon>Bacteria</taxon>
        <taxon>Bacillati</taxon>
        <taxon>Actinomycetota</taxon>
        <taxon>Actinomycetes</taxon>
        <taxon>Mycobacteriales</taxon>
        <taxon>Mycobacteriaceae</taxon>
        <taxon>Mycobacterium</taxon>
        <taxon>Mycobacterium tuberculosis complex</taxon>
    </lineage>
</organism>
<name>RL32_MYCTO</name>
<protein>
    <recommendedName>
        <fullName evidence="2">Large ribosomal subunit protein bL32</fullName>
    </recommendedName>
    <alternativeName>
        <fullName>50S ribosomal protein L32</fullName>
    </alternativeName>
</protein>
<proteinExistence type="inferred from homology"/>
<gene>
    <name type="primary">rpmF</name>
    <name type="ordered locus">MT1007</name>
</gene>
<comment type="similarity">
    <text evidence="2">Belongs to the bacterial ribosomal protein bL32 family.</text>
</comment>
<comment type="sequence caution" evidence="2">
    <conflict type="erroneous initiation">
        <sequence resource="EMBL-CDS" id="AAK45255"/>
    </conflict>
</comment>